<evidence type="ECO:0000255" key="1">
    <source>
        <dbReference type="HAMAP-Rule" id="MF_00490"/>
    </source>
</evidence>
<organism>
    <name type="scientific">Synechococcus sp. (strain CC9605)</name>
    <dbReference type="NCBI Taxonomy" id="110662"/>
    <lineage>
        <taxon>Bacteria</taxon>
        <taxon>Bacillati</taxon>
        <taxon>Cyanobacteriota</taxon>
        <taxon>Cyanophyceae</taxon>
        <taxon>Synechococcales</taxon>
        <taxon>Synechococcaceae</taxon>
        <taxon>Synechococcus</taxon>
    </lineage>
</organism>
<accession>Q3AKJ4</accession>
<comment type="catalytic activity">
    <reaction evidence="1">
        <text>(2R)-O-phospho-3-sulfolactate + H2O = (2R)-3-sulfolactate + phosphate</text>
        <dbReference type="Rhea" id="RHEA:23416"/>
        <dbReference type="ChEBI" id="CHEBI:15377"/>
        <dbReference type="ChEBI" id="CHEBI:15597"/>
        <dbReference type="ChEBI" id="CHEBI:43474"/>
        <dbReference type="ChEBI" id="CHEBI:58738"/>
        <dbReference type="EC" id="3.1.3.71"/>
    </reaction>
</comment>
<comment type="cofactor">
    <cofactor evidence="1">
        <name>Mg(2+)</name>
        <dbReference type="ChEBI" id="CHEBI:18420"/>
    </cofactor>
</comment>
<comment type="similarity">
    <text evidence="1">Belongs to the ComB family.</text>
</comment>
<name>COMB_SYNSC</name>
<dbReference type="EC" id="3.1.3.71" evidence="1"/>
<dbReference type="EMBL" id="CP000110">
    <property type="protein sequence ID" value="ABB34888.1"/>
    <property type="molecule type" value="Genomic_DNA"/>
</dbReference>
<dbReference type="RefSeq" id="WP_011364109.1">
    <property type="nucleotide sequence ID" value="NC_007516.1"/>
</dbReference>
<dbReference type="SMR" id="Q3AKJ4"/>
<dbReference type="STRING" id="110662.Syncc9605_1133"/>
<dbReference type="KEGG" id="syd:Syncc9605_1133"/>
<dbReference type="eggNOG" id="COG2045">
    <property type="taxonomic scope" value="Bacteria"/>
</dbReference>
<dbReference type="HOGENOM" id="CLU_070028_0_1_3"/>
<dbReference type="OrthoDB" id="4913at2"/>
<dbReference type="GO" id="GO:0050532">
    <property type="term" value="F:2-phosphosulfolactate phosphatase activity"/>
    <property type="evidence" value="ECO:0007669"/>
    <property type="project" value="UniProtKB-UniRule"/>
</dbReference>
<dbReference type="GO" id="GO:0000287">
    <property type="term" value="F:magnesium ion binding"/>
    <property type="evidence" value="ECO:0007669"/>
    <property type="project" value="UniProtKB-UniRule"/>
</dbReference>
<dbReference type="GO" id="GO:0050545">
    <property type="term" value="F:sulfopyruvate decarboxylase activity"/>
    <property type="evidence" value="ECO:0007669"/>
    <property type="project" value="TreeGrafter"/>
</dbReference>
<dbReference type="FunFam" id="3.90.1560.10:FF:000001">
    <property type="entry name" value="Probable 2-phosphosulfolactate phosphatase"/>
    <property type="match status" value="1"/>
</dbReference>
<dbReference type="Gene3D" id="3.90.1560.10">
    <property type="entry name" value="ComB-like"/>
    <property type="match status" value="1"/>
</dbReference>
<dbReference type="HAMAP" id="MF_00490">
    <property type="entry name" value="ComB"/>
    <property type="match status" value="1"/>
</dbReference>
<dbReference type="InterPro" id="IPR005238">
    <property type="entry name" value="ComB-like"/>
</dbReference>
<dbReference type="InterPro" id="IPR036702">
    <property type="entry name" value="ComB-like_sf"/>
</dbReference>
<dbReference type="NCBIfam" id="NF002053">
    <property type="entry name" value="PRK00886.1-2"/>
    <property type="match status" value="1"/>
</dbReference>
<dbReference type="PANTHER" id="PTHR37311">
    <property type="entry name" value="2-PHOSPHOSULFOLACTATE PHOSPHATASE-RELATED"/>
    <property type="match status" value="1"/>
</dbReference>
<dbReference type="PANTHER" id="PTHR37311:SF1">
    <property type="entry name" value="2-PHOSPHOSULFOLACTATE PHOSPHATASE-RELATED"/>
    <property type="match status" value="1"/>
</dbReference>
<dbReference type="Pfam" id="PF04029">
    <property type="entry name" value="2-ph_phosp"/>
    <property type="match status" value="1"/>
</dbReference>
<dbReference type="SUPFAM" id="SSF142823">
    <property type="entry name" value="ComB-like"/>
    <property type="match status" value="1"/>
</dbReference>
<gene>
    <name evidence="1" type="primary">comB</name>
    <name type="ordered locus">Syncc9605_1133</name>
</gene>
<proteinExistence type="inferred from homology"/>
<feature type="chain" id="PRO_1000014475" description="Probable 2-phosphosulfolactate phosphatase">
    <location>
        <begin position="1"/>
        <end position="243"/>
    </location>
</feature>
<reference key="1">
    <citation type="submission" date="2005-07" db="EMBL/GenBank/DDBJ databases">
        <title>Complete sequence of Synechococcus sp. CC9605.</title>
        <authorList>
            <consortium name="US DOE Joint Genome Institute"/>
            <person name="Copeland A."/>
            <person name="Lucas S."/>
            <person name="Lapidus A."/>
            <person name="Barry K."/>
            <person name="Detter J.C."/>
            <person name="Glavina T."/>
            <person name="Hammon N."/>
            <person name="Israni S."/>
            <person name="Pitluck S."/>
            <person name="Schmutz J."/>
            <person name="Martinez M."/>
            <person name="Larimer F."/>
            <person name="Land M."/>
            <person name="Kyrpides N."/>
            <person name="Ivanova N."/>
            <person name="Richardson P."/>
        </authorList>
    </citation>
    <scope>NUCLEOTIDE SEQUENCE [LARGE SCALE GENOMIC DNA]</scope>
    <source>
        <strain>CC9605</strain>
    </source>
</reference>
<protein>
    <recommendedName>
        <fullName evidence="1">Probable 2-phosphosulfolactate phosphatase</fullName>
        <ecNumber evidence="1">3.1.3.71</ecNumber>
    </recommendedName>
</protein>
<keyword id="KW-0378">Hydrolase</keyword>
<keyword id="KW-0460">Magnesium</keyword>
<sequence>MQISYFHVPAEMPQDLRPDAAVVIDVLRATTTIARALHNGAEAVQAFASLEDLRAAAAEWPADARLLLGERGGQMLEGFDLGNSPVAVTPEQVAGKRLFMSTTNGTRALDRVREVPLLLTAALPNREAVAQRVLAKQPSHVAIVGSGWEGAYSLEDSLAAGALGHRLLELDPTGSSAANDELTAAVSLWRQWQSDPEACLRTATHGQRLIRLGDHDADFRCCAGLDQLGVVPTQVEPGVLRAA</sequence>